<organism>
    <name type="scientific">Neisseria meningitidis serogroup C / serotype 2a (strain ATCC 700532 / DSM 15464 / FAM18)</name>
    <dbReference type="NCBI Taxonomy" id="272831"/>
    <lineage>
        <taxon>Bacteria</taxon>
        <taxon>Pseudomonadati</taxon>
        <taxon>Pseudomonadota</taxon>
        <taxon>Betaproteobacteria</taxon>
        <taxon>Neisseriales</taxon>
        <taxon>Neisseriaceae</taxon>
        <taxon>Neisseria</taxon>
    </lineage>
</organism>
<gene>
    <name evidence="1" type="primary">lepA</name>
    <name type="ordered locus">NMC0719</name>
</gene>
<reference key="1">
    <citation type="journal article" date="2007" name="PLoS Genet.">
        <title>Meningococcal genetic variation mechanisms viewed through comparative analysis of serogroup C strain FAM18.</title>
        <authorList>
            <person name="Bentley S.D."/>
            <person name="Vernikos G.S."/>
            <person name="Snyder L.A.S."/>
            <person name="Churcher C."/>
            <person name="Arrowsmith C."/>
            <person name="Chillingworth T."/>
            <person name="Cronin A."/>
            <person name="Davis P.H."/>
            <person name="Holroyd N.E."/>
            <person name="Jagels K."/>
            <person name="Maddison M."/>
            <person name="Moule S."/>
            <person name="Rabbinowitsch E."/>
            <person name="Sharp S."/>
            <person name="Unwin L."/>
            <person name="Whitehead S."/>
            <person name="Quail M.A."/>
            <person name="Achtman M."/>
            <person name="Barrell B.G."/>
            <person name="Saunders N.J."/>
            <person name="Parkhill J."/>
        </authorList>
    </citation>
    <scope>NUCLEOTIDE SEQUENCE [LARGE SCALE GENOMIC DNA]</scope>
    <source>
        <strain>ATCC 700532 / DSM 15464 / FAM18</strain>
    </source>
</reference>
<keyword id="KW-0997">Cell inner membrane</keyword>
<keyword id="KW-1003">Cell membrane</keyword>
<keyword id="KW-0342">GTP-binding</keyword>
<keyword id="KW-0378">Hydrolase</keyword>
<keyword id="KW-0472">Membrane</keyword>
<keyword id="KW-0547">Nucleotide-binding</keyword>
<keyword id="KW-0648">Protein biosynthesis</keyword>
<dbReference type="EC" id="3.6.5.n1" evidence="1"/>
<dbReference type="EMBL" id="AM421808">
    <property type="protein sequence ID" value="CAM10009.1"/>
    <property type="molecule type" value="Genomic_DNA"/>
</dbReference>
<dbReference type="RefSeq" id="WP_002214015.1">
    <property type="nucleotide sequence ID" value="NC_008767.1"/>
</dbReference>
<dbReference type="SMR" id="A1KT27"/>
<dbReference type="KEGG" id="nmc:NMC0719"/>
<dbReference type="HOGENOM" id="CLU_009995_3_3_4"/>
<dbReference type="Proteomes" id="UP000002286">
    <property type="component" value="Chromosome"/>
</dbReference>
<dbReference type="GO" id="GO:0005886">
    <property type="term" value="C:plasma membrane"/>
    <property type="evidence" value="ECO:0007669"/>
    <property type="project" value="UniProtKB-SubCell"/>
</dbReference>
<dbReference type="GO" id="GO:0005525">
    <property type="term" value="F:GTP binding"/>
    <property type="evidence" value="ECO:0007669"/>
    <property type="project" value="UniProtKB-UniRule"/>
</dbReference>
<dbReference type="GO" id="GO:0003924">
    <property type="term" value="F:GTPase activity"/>
    <property type="evidence" value="ECO:0007669"/>
    <property type="project" value="UniProtKB-UniRule"/>
</dbReference>
<dbReference type="GO" id="GO:0097216">
    <property type="term" value="F:guanosine tetraphosphate binding"/>
    <property type="evidence" value="ECO:0007669"/>
    <property type="project" value="UniProtKB-ARBA"/>
</dbReference>
<dbReference type="GO" id="GO:0043022">
    <property type="term" value="F:ribosome binding"/>
    <property type="evidence" value="ECO:0007669"/>
    <property type="project" value="UniProtKB-UniRule"/>
</dbReference>
<dbReference type="GO" id="GO:0003746">
    <property type="term" value="F:translation elongation factor activity"/>
    <property type="evidence" value="ECO:0007669"/>
    <property type="project" value="UniProtKB-UniRule"/>
</dbReference>
<dbReference type="GO" id="GO:0045727">
    <property type="term" value="P:positive regulation of translation"/>
    <property type="evidence" value="ECO:0007669"/>
    <property type="project" value="UniProtKB-UniRule"/>
</dbReference>
<dbReference type="CDD" id="cd03699">
    <property type="entry name" value="EF4_II"/>
    <property type="match status" value="1"/>
</dbReference>
<dbReference type="CDD" id="cd16260">
    <property type="entry name" value="EF4_III"/>
    <property type="match status" value="1"/>
</dbReference>
<dbReference type="CDD" id="cd01890">
    <property type="entry name" value="LepA"/>
    <property type="match status" value="1"/>
</dbReference>
<dbReference type="CDD" id="cd03709">
    <property type="entry name" value="lepA_C"/>
    <property type="match status" value="1"/>
</dbReference>
<dbReference type="FunFam" id="3.40.50.300:FF:000078">
    <property type="entry name" value="Elongation factor 4"/>
    <property type="match status" value="1"/>
</dbReference>
<dbReference type="FunFam" id="2.40.30.10:FF:000015">
    <property type="entry name" value="Translation factor GUF1, mitochondrial"/>
    <property type="match status" value="1"/>
</dbReference>
<dbReference type="FunFam" id="3.30.70.240:FF:000007">
    <property type="entry name" value="Translation factor GUF1, mitochondrial"/>
    <property type="match status" value="1"/>
</dbReference>
<dbReference type="FunFam" id="3.30.70.2570:FF:000001">
    <property type="entry name" value="Translation factor GUF1, mitochondrial"/>
    <property type="match status" value="1"/>
</dbReference>
<dbReference type="FunFam" id="3.30.70.870:FF:000004">
    <property type="entry name" value="Translation factor GUF1, mitochondrial"/>
    <property type="match status" value="1"/>
</dbReference>
<dbReference type="Gene3D" id="3.30.70.240">
    <property type="match status" value="1"/>
</dbReference>
<dbReference type="Gene3D" id="3.30.70.2570">
    <property type="entry name" value="Elongation factor 4, C-terminal domain"/>
    <property type="match status" value="1"/>
</dbReference>
<dbReference type="Gene3D" id="3.30.70.870">
    <property type="entry name" value="Elongation Factor G (Translational Gtpase), domain 3"/>
    <property type="match status" value="1"/>
</dbReference>
<dbReference type="Gene3D" id="3.40.50.300">
    <property type="entry name" value="P-loop containing nucleotide triphosphate hydrolases"/>
    <property type="match status" value="1"/>
</dbReference>
<dbReference type="Gene3D" id="2.40.30.10">
    <property type="entry name" value="Translation factors"/>
    <property type="match status" value="1"/>
</dbReference>
<dbReference type="HAMAP" id="MF_00071">
    <property type="entry name" value="LepA"/>
    <property type="match status" value="1"/>
</dbReference>
<dbReference type="InterPro" id="IPR006297">
    <property type="entry name" value="EF-4"/>
</dbReference>
<dbReference type="InterPro" id="IPR035647">
    <property type="entry name" value="EFG_III/V"/>
</dbReference>
<dbReference type="InterPro" id="IPR000640">
    <property type="entry name" value="EFG_V-like"/>
</dbReference>
<dbReference type="InterPro" id="IPR004161">
    <property type="entry name" value="EFTu-like_2"/>
</dbReference>
<dbReference type="InterPro" id="IPR031157">
    <property type="entry name" value="G_TR_CS"/>
</dbReference>
<dbReference type="InterPro" id="IPR038363">
    <property type="entry name" value="LepA_C_sf"/>
</dbReference>
<dbReference type="InterPro" id="IPR013842">
    <property type="entry name" value="LepA_CTD"/>
</dbReference>
<dbReference type="InterPro" id="IPR035654">
    <property type="entry name" value="LepA_IV"/>
</dbReference>
<dbReference type="InterPro" id="IPR027417">
    <property type="entry name" value="P-loop_NTPase"/>
</dbReference>
<dbReference type="InterPro" id="IPR005225">
    <property type="entry name" value="Small_GTP-bd"/>
</dbReference>
<dbReference type="InterPro" id="IPR000795">
    <property type="entry name" value="T_Tr_GTP-bd_dom"/>
</dbReference>
<dbReference type="InterPro" id="IPR009000">
    <property type="entry name" value="Transl_B-barrel_sf"/>
</dbReference>
<dbReference type="NCBIfam" id="TIGR01393">
    <property type="entry name" value="lepA"/>
    <property type="match status" value="1"/>
</dbReference>
<dbReference type="NCBIfam" id="TIGR00231">
    <property type="entry name" value="small_GTP"/>
    <property type="match status" value="1"/>
</dbReference>
<dbReference type="PANTHER" id="PTHR43512:SF4">
    <property type="entry name" value="TRANSLATION FACTOR GUF1 HOMOLOG, CHLOROPLASTIC"/>
    <property type="match status" value="1"/>
</dbReference>
<dbReference type="PANTHER" id="PTHR43512">
    <property type="entry name" value="TRANSLATION FACTOR GUF1-RELATED"/>
    <property type="match status" value="1"/>
</dbReference>
<dbReference type="Pfam" id="PF00679">
    <property type="entry name" value="EFG_C"/>
    <property type="match status" value="1"/>
</dbReference>
<dbReference type="Pfam" id="PF00009">
    <property type="entry name" value="GTP_EFTU"/>
    <property type="match status" value="1"/>
</dbReference>
<dbReference type="Pfam" id="PF03144">
    <property type="entry name" value="GTP_EFTU_D2"/>
    <property type="match status" value="1"/>
</dbReference>
<dbReference type="Pfam" id="PF06421">
    <property type="entry name" value="LepA_C"/>
    <property type="match status" value="1"/>
</dbReference>
<dbReference type="PRINTS" id="PR00315">
    <property type="entry name" value="ELONGATNFCT"/>
</dbReference>
<dbReference type="SMART" id="SM00838">
    <property type="entry name" value="EFG_C"/>
    <property type="match status" value="1"/>
</dbReference>
<dbReference type="SUPFAM" id="SSF54980">
    <property type="entry name" value="EF-G C-terminal domain-like"/>
    <property type="match status" value="2"/>
</dbReference>
<dbReference type="SUPFAM" id="SSF52540">
    <property type="entry name" value="P-loop containing nucleoside triphosphate hydrolases"/>
    <property type="match status" value="1"/>
</dbReference>
<dbReference type="SUPFAM" id="SSF50447">
    <property type="entry name" value="Translation proteins"/>
    <property type="match status" value="1"/>
</dbReference>
<dbReference type="PROSITE" id="PS00301">
    <property type="entry name" value="G_TR_1"/>
    <property type="match status" value="1"/>
</dbReference>
<dbReference type="PROSITE" id="PS51722">
    <property type="entry name" value="G_TR_2"/>
    <property type="match status" value="1"/>
</dbReference>
<name>LEPA_NEIMF</name>
<evidence type="ECO:0000255" key="1">
    <source>
        <dbReference type="HAMAP-Rule" id="MF_00071"/>
    </source>
</evidence>
<protein>
    <recommendedName>
        <fullName evidence="1">Elongation factor 4</fullName>
        <shortName evidence="1">EF-4</shortName>
        <ecNumber evidence="1">3.6.5.n1</ecNumber>
    </recommendedName>
    <alternativeName>
        <fullName evidence="1">Ribosomal back-translocase LepA</fullName>
    </alternativeName>
</protein>
<accession>A1KT27</accession>
<proteinExistence type="inferred from homology"/>
<comment type="function">
    <text evidence="1">Required for accurate and efficient protein synthesis under certain stress conditions. May act as a fidelity factor of the translation reaction, by catalyzing a one-codon backward translocation of tRNAs on improperly translocated ribosomes. Back-translocation proceeds from a post-translocation (POST) complex to a pre-translocation (PRE) complex, thus giving elongation factor G a second chance to translocate the tRNAs correctly. Binds to ribosomes in a GTP-dependent manner.</text>
</comment>
<comment type="catalytic activity">
    <reaction evidence="1">
        <text>GTP + H2O = GDP + phosphate + H(+)</text>
        <dbReference type="Rhea" id="RHEA:19669"/>
        <dbReference type="ChEBI" id="CHEBI:15377"/>
        <dbReference type="ChEBI" id="CHEBI:15378"/>
        <dbReference type="ChEBI" id="CHEBI:37565"/>
        <dbReference type="ChEBI" id="CHEBI:43474"/>
        <dbReference type="ChEBI" id="CHEBI:58189"/>
        <dbReference type="EC" id="3.6.5.n1"/>
    </reaction>
</comment>
<comment type="subcellular location">
    <subcellularLocation>
        <location evidence="1">Cell inner membrane</location>
        <topology evidence="1">Peripheral membrane protein</topology>
        <orientation evidence="1">Cytoplasmic side</orientation>
    </subcellularLocation>
</comment>
<comment type="similarity">
    <text evidence="1">Belongs to the TRAFAC class translation factor GTPase superfamily. Classic translation factor GTPase family. LepA subfamily.</text>
</comment>
<feature type="chain" id="PRO_1000032024" description="Elongation factor 4">
    <location>
        <begin position="1"/>
        <end position="597"/>
    </location>
</feature>
<feature type="domain" description="tr-type G">
    <location>
        <begin position="2"/>
        <end position="184"/>
    </location>
</feature>
<feature type="binding site" evidence="1">
    <location>
        <begin position="14"/>
        <end position="19"/>
    </location>
    <ligand>
        <name>GTP</name>
        <dbReference type="ChEBI" id="CHEBI:37565"/>
    </ligand>
</feature>
<feature type="binding site" evidence="1">
    <location>
        <begin position="131"/>
        <end position="134"/>
    </location>
    <ligand>
        <name>GTP</name>
        <dbReference type="ChEBI" id="CHEBI:37565"/>
    </ligand>
</feature>
<sequence length="597" mass="66002">MKNIRNFSIIAHIDHGKSTLADRFIQYCGGLDLREMSTQVLDSMDIEKERGITIKAQTAALNYKARDGQVYQLNLIDTPGHVDFSYEVSRSLSACEGALLVVDASQGVEAQTVANCYTAIDLGVEVVPVLNKIDLPAADPERVEQEIEDIIGIDAVGAVQCSAKSGIGVEDVLEEIVAKIPAPTGDENAPLQAVIVDSWFDNYVGVVMLIRVKNGTIKLKDKVRFMSTKAETQVEQLGVFTPKSVQKQELKAGEVGFLITGVKELGQAKVGDTVTLVANPATEPLPGFQEVQSQVFAGLYPVESHDYEALRDALEKLQLNDASLKFEPEVSQALGFGFRCGFLGLLHLEIVQERLEREFDMDLITTAPTVVYEVVLKSGEKIEVENPSKLPDIGSIETILEPIITATILVPQEYVGNVMTLCNQKRGVQVNMQYMGRQVMLTYDLPMNEVVMDFFDKLKSTSRGYASLDYHFKEFQPSDLIKLDIMVNGEKVDALSLIVHRQSAVHRGRELASKMRELIPRQMFDIAVQAAIGSQIIARENVKALRKNVLAKCYGGDITRKKKLLEKQKAGKRRMKQVGNVEIPQSAFLAILQVSDK</sequence>